<dbReference type="EC" id="2.7.1.48" evidence="1"/>
<dbReference type="EMBL" id="CP000024">
    <property type="protein sequence ID" value="AAV62804.1"/>
    <property type="molecule type" value="Genomic_DNA"/>
</dbReference>
<dbReference type="RefSeq" id="WP_002946476.1">
    <property type="nucleotide sequence ID" value="NC_006449.1"/>
</dbReference>
<dbReference type="SMR" id="Q5LZ98"/>
<dbReference type="GeneID" id="66899049"/>
<dbReference type="KEGG" id="stc:str1260"/>
<dbReference type="HOGENOM" id="CLU_021278_1_2_9"/>
<dbReference type="UniPathway" id="UPA00574">
    <property type="reaction ID" value="UER00637"/>
</dbReference>
<dbReference type="UniPathway" id="UPA00579">
    <property type="reaction ID" value="UER00640"/>
</dbReference>
<dbReference type="GO" id="GO:0005737">
    <property type="term" value="C:cytoplasm"/>
    <property type="evidence" value="ECO:0007669"/>
    <property type="project" value="UniProtKB-SubCell"/>
</dbReference>
<dbReference type="GO" id="GO:0005524">
    <property type="term" value="F:ATP binding"/>
    <property type="evidence" value="ECO:0007669"/>
    <property type="project" value="UniProtKB-UniRule"/>
</dbReference>
<dbReference type="GO" id="GO:0043771">
    <property type="term" value="F:cytidine kinase activity"/>
    <property type="evidence" value="ECO:0007669"/>
    <property type="project" value="RHEA"/>
</dbReference>
<dbReference type="GO" id="GO:0004849">
    <property type="term" value="F:uridine kinase activity"/>
    <property type="evidence" value="ECO:0007669"/>
    <property type="project" value="UniProtKB-UniRule"/>
</dbReference>
<dbReference type="GO" id="GO:0044211">
    <property type="term" value="P:CTP salvage"/>
    <property type="evidence" value="ECO:0007669"/>
    <property type="project" value="UniProtKB-UniRule"/>
</dbReference>
<dbReference type="GO" id="GO:0044206">
    <property type="term" value="P:UMP salvage"/>
    <property type="evidence" value="ECO:0007669"/>
    <property type="project" value="UniProtKB-UniRule"/>
</dbReference>
<dbReference type="CDD" id="cd02023">
    <property type="entry name" value="UMPK"/>
    <property type="match status" value="1"/>
</dbReference>
<dbReference type="Gene3D" id="3.40.50.300">
    <property type="entry name" value="P-loop containing nucleotide triphosphate hydrolases"/>
    <property type="match status" value="1"/>
</dbReference>
<dbReference type="HAMAP" id="MF_00551">
    <property type="entry name" value="Uridine_kinase"/>
    <property type="match status" value="1"/>
</dbReference>
<dbReference type="InterPro" id="IPR027417">
    <property type="entry name" value="P-loop_NTPase"/>
</dbReference>
<dbReference type="InterPro" id="IPR006083">
    <property type="entry name" value="PRK/URK"/>
</dbReference>
<dbReference type="InterPro" id="IPR026008">
    <property type="entry name" value="Uridine_kinase"/>
</dbReference>
<dbReference type="InterPro" id="IPR000764">
    <property type="entry name" value="Uridine_kinase-like"/>
</dbReference>
<dbReference type="NCBIfam" id="NF004018">
    <property type="entry name" value="PRK05480.1"/>
    <property type="match status" value="1"/>
</dbReference>
<dbReference type="NCBIfam" id="TIGR00235">
    <property type="entry name" value="udk"/>
    <property type="match status" value="1"/>
</dbReference>
<dbReference type="PANTHER" id="PTHR10285">
    <property type="entry name" value="URIDINE KINASE"/>
    <property type="match status" value="1"/>
</dbReference>
<dbReference type="Pfam" id="PF00485">
    <property type="entry name" value="PRK"/>
    <property type="match status" value="1"/>
</dbReference>
<dbReference type="PRINTS" id="PR00988">
    <property type="entry name" value="URIDINKINASE"/>
</dbReference>
<dbReference type="SUPFAM" id="SSF52540">
    <property type="entry name" value="P-loop containing nucleoside triphosphate hydrolases"/>
    <property type="match status" value="1"/>
</dbReference>
<proteinExistence type="inferred from homology"/>
<comment type="catalytic activity">
    <reaction evidence="1">
        <text>uridine + ATP = UMP + ADP + H(+)</text>
        <dbReference type="Rhea" id="RHEA:16825"/>
        <dbReference type="ChEBI" id="CHEBI:15378"/>
        <dbReference type="ChEBI" id="CHEBI:16704"/>
        <dbReference type="ChEBI" id="CHEBI:30616"/>
        <dbReference type="ChEBI" id="CHEBI:57865"/>
        <dbReference type="ChEBI" id="CHEBI:456216"/>
        <dbReference type="EC" id="2.7.1.48"/>
    </reaction>
</comment>
<comment type="catalytic activity">
    <reaction evidence="1">
        <text>cytidine + ATP = CMP + ADP + H(+)</text>
        <dbReference type="Rhea" id="RHEA:24674"/>
        <dbReference type="ChEBI" id="CHEBI:15378"/>
        <dbReference type="ChEBI" id="CHEBI:17562"/>
        <dbReference type="ChEBI" id="CHEBI:30616"/>
        <dbReference type="ChEBI" id="CHEBI:60377"/>
        <dbReference type="ChEBI" id="CHEBI:456216"/>
        <dbReference type="EC" id="2.7.1.48"/>
    </reaction>
</comment>
<comment type="pathway">
    <text evidence="1">Pyrimidine metabolism; CTP biosynthesis via salvage pathway; CTP from cytidine: step 1/3.</text>
</comment>
<comment type="pathway">
    <text evidence="1">Pyrimidine metabolism; UMP biosynthesis via salvage pathway; UMP from uridine: step 1/1.</text>
</comment>
<comment type="subcellular location">
    <subcellularLocation>
        <location evidence="1">Cytoplasm</location>
    </subcellularLocation>
</comment>
<comment type="similarity">
    <text evidence="1">Belongs to the uridine kinase family.</text>
</comment>
<protein>
    <recommendedName>
        <fullName evidence="1">Uridine kinase</fullName>
        <ecNumber evidence="1">2.7.1.48</ecNumber>
    </recommendedName>
    <alternativeName>
        <fullName evidence="1">Cytidine monophosphokinase</fullName>
    </alternativeName>
    <alternativeName>
        <fullName evidence="1">Uridine monophosphokinase</fullName>
    </alternativeName>
</protein>
<reference key="1">
    <citation type="journal article" date="2004" name="Nat. Biotechnol.">
        <title>Complete sequence and comparative genome analysis of the dairy bacterium Streptococcus thermophilus.</title>
        <authorList>
            <person name="Bolotin A."/>
            <person name="Quinquis B."/>
            <person name="Renault P."/>
            <person name="Sorokin A."/>
            <person name="Ehrlich S.D."/>
            <person name="Kulakauskas S."/>
            <person name="Lapidus A."/>
            <person name="Goltsman E."/>
            <person name="Mazur M."/>
            <person name="Pusch G.D."/>
            <person name="Fonstein M."/>
            <person name="Overbeek R."/>
            <person name="Kyprides N."/>
            <person name="Purnelle B."/>
            <person name="Prozzi D."/>
            <person name="Ngui K."/>
            <person name="Masuy D."/>
            <person name="Hancy F."/>
            <person name="Burteau S."/>
            <person name="Boutry M."/>
            <person name="Delcour J."/>
            <person name="Goffeau A."/>
            <person name="Hols P."/>
        </authorList>
    </citation>
    <scope>NUCLEOTIDE SEQUENCE [LARGE SCALE GENOMIC DNA]</scope>
    <source>
        <strain>CNRZ 1066</strain>
    </source>
</reference>
<sequence>MPKKPIIIGVTGGSGGGKTSVSRAILSNFPDEKIAMIEHDSYYKDQSHLTFEERVSTNYDHPFAFDTDLMIEHINELIAGRPVDIPIYDYTQHTRSNKTYRQEPQDVFIVEGILVLEDKRLRDLMDIKLFVDTDDDIRIIRRIKRDMEERGRSLDSIIDQYNSVVKPMYHQFIEPTKRYADVVIPEGVSNTVAIDLINTKVASILEESKKA</sequence>
<feature type="chain" id="PRO_1000017910" description="Uridine kinase">
    <location>
        <begin position="1"/>
        <end position="211"/>
    </location>
</feature>
<feature type="binding site" evidence="1">
    <location>
        <begin position="12"/>
        <end position="19"/>
    </location>
    <ligand>
        <name>ATP</name>
        <dbReference type="ChEBI" id="CHEBI:30616"/>
    </ligand>
</feature>
<keyword id="KW-0067">ATP-binding</keyword>
<keyword id="KW-0963">Cytoplasm</keyword>
<keyword id="KW-0418">Kinase</keyword>
<keyword id="KW-0547">Nucleotide-binding</keyword>
<keyword id="KW-0808">Transferase</keyword>
<evidence type="ECO:0000255" key="1">
    <source>
        <dbReference type="HAMAP-Rule" id="MF_00551"/>
    </source>
</evidence>
<name>URK_STRT1</name>
<gene>
    <name evidence="1" type="primary">udk</name>
    <name type="ordered locus">str1260</name>
</gene>
<accession>Q5LZ98</accession>
<organism>
    <name type="scientific">Streptococcus thermophilus (strain CNRZ 1066)</name>
    <dbReference type="NCBI Taxonomy" id="299768"/>
    <lineage>
        <taxon>Bacteria</taxon>
        <taxon>Bacillati</taxon>
        <taxon>Bacillota</taxon>
        <taxon>Bacilli</taxon>
        <taxon>Lactobacillales</taxon>
        <taxon>Streptococcaceae</taxon>
        <taxon>Streptococcus</taxon>
    </lineage>
</organism>